<protein>
    <recommendedName>
        <fullName evidence="7">Collagen alpha-1(I) chain</fullName>
    </recommendedName>
    <alternativeName>
        <fullName evidence="1">Alpha-1 type I collagen</fullName>
    </alternativeName>
</protein>
<keyword id="KW-0903">Direct protein sequencing</keyword>
<keyword id="KW-0952">Extinct organism protein</keyword>
<keyword id="KW-0272">Extracellular matrix</keyword>
<keyword id="KW-0325">Glycoprotein</keyword>
<keyword id="KW-0379">Hydroxylation</keyword>
<keyword id="KW-0597">Phosphoprotein</keyword>
<keyword id="KW-0964">Secreted</keyword>
<accession>C0HLJ9</accession>
<dbReference type="GO" id="GO:0005584">
    <property type="term" value="C:collagen type I trimer"/>
    <property type="evidence" value="ECO:0007669"/>
    <property type="project" value="TreeGrafter"/>
</dbReference>
<dbReference type="GO" id="GO:0005737">
    <property type="term" value="C:cytoplasm"/>
    <property type="evidence" value="ECO:0007669"/>
    <property type="project" value="TreeGrafter"/>
</dbReference>
<dbReference type="GO" id="GO:0005615">
    <property type="term" value="C:extracellular space"/>
    <property type="evidence" value="ECO:0007669"/>
    <property type="project" value="TreeGrafter"/>
</dbReference>
<dbReference type="GO" id="GO:0030020">
    <property type="term" value="F:extracellular matrix structural constituent conferring tensile strength"/>
    <property type="evidence" value="ECO:0007669"/>
    <property type="project" value="TreeGrafter"/>
</dbReference>
<dbReference type="GO" id="GO:0001568">
    <property type="term" value="P:blood vessel development"/>
    <property type="evidence" value="ECO:0007669"/>
    <property type="project" value="TreeGrafter"/>
</dbReference>
<dbReference type="GO" id="GO:0030198">
    <property type="term" value="P:extracellular matrix organization"/>
    <property type="evidence" value="ECO:0007669"/>
    <property type="project" value="TreeGrafter"/>
</dbReference>
<dbReference type="GO" id="GO:0001503">
    <property type="term" value="P:ossification"/>
    <property type="evidence" value="ECO:0007669"/>
    <property type="project" value="TreeGrafter"/>
</dbReference>
<dbReference type="GO" id="GO:0009612">
    <property type="term" value="P:response to mechanical stimulus"/>
    <property type="evidence" value="ECO:0007669"/>
    <property type="project" value="TreeGrafter"/>
</dbReference>
<dbReference type="GO" id="GO:0001501">
    <property type="term" value="P:skeletal system development"/>
    <property type="evidence" value="ECO:0007669"/>
    <property type="project" value="TreeGrafter"/>
</dbReference>
<dbReference type="GO" id="GO:0043588">
    <property type="term" value="P:skin development"/>
    <property type="evidence" value="ECO:0007669"/>
    <property type="project" value="TreeGrafter"/>
</dbReference>
<dbReference type="InterPro" id="IPR008160">
    <property type="entry name" value="Collagen"/>
</dbReference>
<dbReference type="InterPro" id="IPR050149">
    <property type="entry name" value="Collagen_superfamily"/>
</dbReference>
<dbReference type="PANTHER" id="PTHR24023">
    <property type="entry name" value="COLLAGEN ALPHA"/>
    <property type="match status" value="1"/>
</dbReference>
<dbReference type="PANTHER" id="PTHR24023:SF569">
    <property type="entry name" value="COLLAGEN ALPHA-1(I) CHAIN"/>
    <property type="match status" value="1"/>
</dbReference>
<dbReference type="Pfam" id="PF01391">
    <property type="entry name" value="Collagen"/>
    <property type="match status" value="14"/>
</dbReference>
<name>CO1A1_PARHA</name>
<comment type="function">
    <text evidence="8">Type I collagen is a member of group I collagen (fibrillar forming collagen).</text>
</comment>
<comment type="subunit">
    <text evidence="8">Trimers of one alpha 2(I) and two alpha 1(I) chains.</text>
</comment>
<comment type="subcellular location">
    <subcellularLocation>
        <location>Secreted</location>
    </subcellularLocation>
    <subcellularLocation>
        <location>Secreted</location>
        <location>Extracellular space</location>
    </subcellularLocation>
    <subcellularLocation>
        <location evidence="8">Secreted</location>
        <location evidence="8">Extracellular space</location>
        <location evidence="8">Extracellular matrix</location>
    </subcellularLocation>
</comment>
<comment type="tissue specificity">
    <text evidence="6">Expressed in bones.</text>
</comment>
<comment type="PTM">
    <text evidence="1">Contains mostly 4-hydroxyproline. Proline residues at the third position of the tripeptide repeating unit (G-X-Y) are hydroxylated in some or all of the chains.</text>
</comment>
<comment type="PTM">
    <text evidence="4">Contains 3-hydroxyproline at a few sites. This modification occurs on the first proline residue in the sequence motif Gly-Pro-Hyp, where Hyp is 4-hydroxyproline.</text>
</comment>
<comment type="PTM">
    <text evidence="1">Lysine residues at the third position of the tripeptide repeating unit (G-X-Y) are 5-hydroxylated in some or all of the chains.</text>
</comment>
<comment type="PTM">
    <text evidence="1">O-glycosylated on hydroxylated lysine residues. The O-linked glycan consists of a Glc-Gal disaccharide.</text>
</comment>
<comment type="miscellaneous">
    <text evidence="6">These protein fragments were extracted from an ancient femur bone collected in Roseburgh, Oregon, USA.</text>
</comment>
<comment type="similarity">
    <text evidence="8">Belongs to the fibrillar collagen family.</text>
</comment>
<evidence type="ECO:0000250" key="1">
    <source>
        <dbReference type="UniProtKB" id="P02452"/>
    </source>
</evidence>
<evidence type="ECO:0000250" key="2">
    <source>
        <dbReference type="UniProtKB" id="P02454"/>
    </source>
</evidence>
<evidence type="ECO:0000250" key="3">
    <source>
        <dbReference type="UniProtKB" id="P02457"/>
    </source>
</evidence>
<evidence type="ECO:0000250" key="4">
    <source>
        <dbReference type="UniProtKB" id="P11087"/>
    </source>
</evidence>
<evidence type="ECO:0000256" key="5">
    <source>
        <dbReference type="SAM" id="MobiDB-lite"/>
    </source>
</evidence>
<evidence type="ECO:0000269" key="6">
    <source>
    </source>
</evidence>
<evidence type="ECO:0000303" key="7">
    <source>
    </source>
</evidence>
<evidence type="ECO:0000305" key="8"/>
<reference evidence="8" key="1">
    <citation type="journal article" date="2019" name="Nat. Ecol. Evol.">
        <title>Palaeoproteomics resolves sloth relationships.</title>
        <authorList>
            <person name="Presslee S."/>
            <person name="Slater G.J."/>
            <person name="Pujos F."/>
            <person name="Forasiepi A.M."/>
            <person name="Fischer R."/>
            <person name="Molloy K."/>
            <person name="Mackie M."/>
            <person name="Olsen J.V."/>
            <person name="Kramarz A."/>
            <person name="Taglioretti M."/>
            <person name="Scaglia F."/>
            <person name="Lezcano M."/>
            <person name="Lanata J.L."/>
            <person name="Southon J."/>
            <person name="Feranec R."/>
            <person name="Bloch J."/>
            <person name="Hajduk A."/>
            <person name="Martin F.M."/>
            <person name="Salas Gismondi R."/>
            <person name="Reguero M."/>
            <person name="de Muizon C."/>
            <person name="Greenwood A."/>
            <person name="Chait B.T."/>
            <person name="Penkman K."/>
            <person name="Collins M."/>
            <person name="MacPhee R.D.E."/>
        </authorList>
    </citation>
    <scope>PROTEIN SEQUENCE</scope>
    <scope>TISSUE SPECIFICITY</scope>
    <scope>IDENTIFICATION BY MASS SPECTROMETRY</scope>
    <source>
        <tissue evidence="7">Bone</tissue>
    </source>
</reference>
<feature type="chain" id="PRO_0000448466" description="Collagen alpha-1(I) chain">
    <location>
        <begin position="1"/>
        <end position="1008"/>
    </location>
</feature>
<feature type="region of interest" description="Disordered" evidence="5">
    <location>
        <begin position="1"/>
        <end position="1008"/>
    </location>
</feature>
<feature type="compositionally biased region" description="Basic and acidic residues" evidence="5">
    <location>
        <begin position="55"/>
        <end position="69"/>
    </location>
</feature>
<feature type="compositionally biased region" description="Low complexity" evidence="5">
    <location>
        <begin position="105"/>
        <end position="121"/>
    </location>
</feature>
<feature type="compositionally biased region" description="Low complexity" evidence="5">
    <location>
        <begin position="139"/>
        <end position="157"/>
    </location>
</feature>
<feature type="compositionally biased region" description="Pro residues" evidence="5">
    <location>
        <begin position="159"/>
        <end position="171"/>
    </location>
</feature>
<feature type="compositionally biased region" description="Low complexity" evidence="5">
    <location>
        <begin position="205"/>
        <end position="235"/>
    </location>
</feature>
<feature type="compositionally biased region" description="Gly residues" evidence="5">
    <location>
        <begin position="236"/>
        <end position="255"/>
    </location>
</feature>
<feature type="compositionally biased region" description="Gly residues" evidence="5">
    <location>
        <begin position="309"/>
        <end position="318"/>
    </location>
</feature>
<feature type="compositionally biased region" description="Low complexity" evidence="5">
    <location>
        <begin position="362"/>
        <end position="388"/>
    </location>
</feature>
<feature type="compositionally biased region" description="Low complexity" evidence="5">
    <location>
        <begin position="397"/>
        <end position="416"/>
    </location>
</feature>
<feature type="compositionally biased region" description="Low complexity" evidence="5">
    <location>
        <begin position="475"/>
        <end position="484"/>
    </location>
</feature>
<feature type="compositionally biased region" description="Low complexity" evidence="5">
    <location>
        <begin position="519"/>
        <end position="547"/>
    </location>
</feature>
<feature type="compositionally biased region" description="Low complexity" evidence="5">
    <location>
        <begin position="604"/>
        <end position="618"/>
    </location>
</feature>
<feature type="compositionally biased region" description="Low complexity" evidence="5">
    <location>
        <begin position="631"/>
        <end position="658"/>
    </location>
</feature>
<feature type="compositionally biased region" description="Pro residues" evidence="5">
    <location>
        <begin position="660"/>
        <end position="672"/>
    </location>
</feature>
<feature type="compositionally biased region" description="Low complexity" evidence="5">
    <location>
        <begin position="687"/>
        <end position="703"/>
    </location>
</feature>
<feature type="compositionally biased region" description="Low complexity" evidence="5">
    <location>
        <begin position="731"/>
        <end position="740"/>
    </location>
</feature>
<feature type="compositionally biased region" description="Low complexity" evidence="5">
    <location>
        <begin position="752"/>
        <end position="764"/>
    </location>
</feature>
<feature type="compositionally biased region" description="Pro residues" evidence="5">
    <location>
        <begin position="813"/>
        <end position="823"/>
    </location>
</feature>
<feature type="compositionally biased region" description="Low complexity" evidence="5">
    <location>
        <begin position="825"/>
        <end position="840"/>
    </location>
</feature>
<feature type="compositionally biased region" description="Pro residues" evidence="5">
    <location>
        <begin position="858"/>
        <end position="873"/>
    </location>
</feature>
<feature type="compositionally biased region" description="Low complexity" evidence="5">
    <location>
        <begin position="894"/>
        <end position="908"/>
    </location>
</feature>
<feature type="compositionally biased region" description="Basic and acidic residues" evidence="5">
    <location>
        <begin position="909"/>
        <end position="923"/>
    </location>
</feature>
<feature type="compositionally biased region" description="Low complexity" evidence="5">
    <location>
        <begin position="942"/>
        <end position="975"/>
    </location>
</feature>
<feature type="compositionally biased region" description="Pro residues" evidence="5">
    <location>
        <begin position="993"/>
        <end position="1008"/>
    </location>
</feature>
<feature type="modified residue" description="4-hydroxyproline" evidence="3">
    <location>
        <position position="18"/>
    </location>
</feature>
<feature type="modified residue" description="4-hydroxyproline" evidence="3">
    <location>
        <position position="21"/>
    </location>
</feature>
<feature type="modified residue" description="4-hydroxyproline" evidence="3">
    <location>
        <position position="23"/>
    </location>
</feature>
<feature type="modified residue" description="4-hydroxyproline" evidence="3">
    <location>
        <position position="32"/>
    </location>
</feature>
<feature type="modified residue" description="4-hydroxyproline" evidence="3">
    <location>
        <position position="35"/>
    </location>
</feature>
<feature type="modified residue" description="4-hydroxyproline" evidence="3">
    <location>
        <position position="38"/>
    </location>
</feature>
<feature type="modified residue" description="4-hydroxyproline" evidence="3">
    <location>
        <position position="52"/>
    </location>
</feature>
<feature type="modified residue" description="4-hydroxyproline" evidence="3">
    <location>
        <position position="67"/>
    </location>
</feature>
<feature type="modified residue" description="4-hydroxyproline" evidence="3">
    <location>
        <position position="73"/>
    </location>
</feature>
<feature type="modified residue" description="4-hydroxyproline" evidence="3">
    <location>
        <position position="82"/>
    </location>
</feature>
<feature type="modified residue" description="4-hydroxyproline" evidence="3">
    <location>
        <position position="88"/>
    </location>
</feature>
<feature type="modified residue" description="5-hydroxylysine; alternate" evidence="1">
    <location>
        <position position="91"/>
    </location>
</feature>
<feature type="modified residue" description="Phosphoserine" evidence="2">
    <location>
        <position position="97"/>
    </location>
</feature>
<feature type="modified residue" description="4-hydroxyproline" evidence="3">
    <location>
        <position position="115"/>
    </location>
</feature>
<feature type="modified residue" description="4-hydroxyproline" evidence="3">
    <location>
        <position position="118"/>
    </location>
</feature>
<feature type="modified residue" description="4-hydroxyproline" evidence="3">
    <location>
        <position position="124"/>
    </location>
</feature>
<feature type="modified residue" description="4-hydroxyproline" evidence="3">
    <location>
        <position position="133"/>
    </location>
</feature>
<feature type="modified residue" description="4-hydroxyproline" evidence="3">
    <location>
        <position position="139"/>
    </location>
</feature>
<feature type="modified residue" description="4-hydroxyproline" evidence="3">
    <location>
        <position position="160"/>
    </location>
</feature>
<feature type="modified residue" description="4-hydroxyproline" evidence="3">
    <location>
        <position position="169"/>
    </location>
</feature>
<feature type="modified residue" description="4-hydroxyproline" evidence="3">
    <location>
        <position position="172"/>
    </location>
</feature>
<feature type="modified residue" description="4-hydroxyproline" evidence="3">
    <location>
        <position position="199"/>
    </location>
</feature>
<feature type="modified residue" description="4-hydroxyproline" evidence="3">
    <location>
        <position position="202"/>
    </location>
</feature>
<feature type="modified residue" description="4-hydroxyproline" evidence="3">
    <location>
        <position position="214"/>
    </location>
</feature>
<feature type="modified residue" description="4-hydroxyproline" evidence="3">
    <location>
        <position position="220"/>
    </location>
</feature>
<feature type="modified residue" description="4-hydroxyproline" evidence="3">
    <location>
        <position position="229"/>
    </location>
</feature>
<feature type="modified residue" description="4-hydroxyproline" evidence="3">
    <location>
        <position position="235"/>
    </location>
</feature>
<feature type="modified residue" description="4-hydroxyproline" evidence="3">
    <location>
        <position position="238"/>
    </location>
</feature>
<feature type="modified residue" description="5-hydroxylysine" evidence="3">
    <location>
        <position position="254"/>
    </location>
</feature>
<feature type="modified residue" description="4-hydroxyproline" evidence="3">
    <location>
        <position position="260"/>
    </location>
</feature>
<feature type="modified residue" description="4-hydroxyproline" evidence="3">
    <location>
        <position position="263"/>
    </location>
</feature>
<feature type="modified residue" description="4-hydroxyproline" evidence="3">
    <location>
        <position position="275"/>
    </location>
</feature>
<feature type="modified residue" description="4-hydroxyproline" evidence="3">
    <location>
        <position position="284"/>
    </location>
</feature>
<feature type="modified residue" description="4-hydroxyproline" evidence="3">
    <location>
        <position position="299"/>
    </location>
</feature>
<feature type="modified residue" description="4-hydroxyproline" evidence="3">
    <location>
        <position position="305"/>
    </location>
</feature>
<feature type="modified residue" description="4-hydroxyproline" evidence="3">
    <location>
        <position position="314"/>
    </location>
</feature>
<feature type="modified residue" description="4-hydroxyproline" evidence="3">
    <location>
        <position position="320"/>
    </location>
</feature>
<feature type="modified residue" description="5-hydroxylysine" evidence="3">
    <location>
        <position position="329"/>
    </location>
</feature>
<feature type="modified residue" description="4-hydroxyproline" evidence="3">
    <location>
        <position position="338"/>
    </location>
</feature>
<feature type="modified residue" description="4-hydroxyproline" evidence="3">
    <location>
        <position position="347"/>
    </location>
</feature>
<feature type="modified residue" description="4-hydroxyproline" evidence="3">
    <location>
        <position position="353"/>
    </location>
</feature>
<feature type="modified residue" description="4-hydroxyproline" evidence="3">
    <location>
        <position position="359"/>
    </location>
</feature>
<feature type="modified residue" description="4-hydroxyproline" evidence="3">
    <location>
        <position position="368"/>
    </location>
</feature>
<feature type="modified residue" description="4-hydroxyproline" evidence="3">
    <location>
        <position position="371"/>
    </location>
</feature>
<feature type="modified residue" description="4-hydroxyproline" evidence="3">
    <location>
        <position position="380"/>
    </location>
</feature>
<feature type="modified residue" description="4-hydroxyproline" evidence="3">
    <location>
        <position position="389"/>
    </location>
</feature>
<feature type="modified residue" description="4-hydroxyproline" evidence="3">
    <location>
        <position position="395"/>
    </location>
</feature>
<feature type="modified residue" description="4-hydroxyproline" evidence="3">
    <location>
        <position position="407"/>
    </location>
</feature>
<feature type="modified residue" description="4-hydroxyproline" evidence="3">
    <location>
        <position position="416"/>
    </location>
</feature>
<feature type="modified residue" description="4-hydroxyproline" evidence="3">
    <location>
        <position position="425"/>
    </location>
</feature>
<feature type="modified residue" description="4-hydroxyproline" evidence="3">
    <location>
        <position position="428"/>
    </location>
</feature>
<feature type="modified residue" description="4-hydroxyproline" evidence="3">
    <location>
        <position position="446"/>
    </location>
</feature>
<feature type="modified residue" description="4-hydroxyproline" evidence="3">
    <location>
        <position position="463"/>
    </location>
</feature>
<feature type="modified residue" description="4-hydroxyproline" evidence="3">
    <location>
        <position position="469"/>
    </location>
</feature>
<feature type="modified residue" description="4-hydroxyproline" evidence="3">
    <location>
        <position position="475"/>
    </location>
</feature>
<feature type="modified residue" description="4-hydroxyproline" evidence="3">
    <location>
        <position position="481"/>
    </location>
</feature>
<feature type="modified residue" description="4-hydroxyproline" evidence="3">
    <location>
        <position position="487"/>
    </location>
</feature>
<feature type="modified residue" description="4-hydroxyproline" evidence="3">
    <location>
        <position position="493"/>
    </location>
</feature>
<feature type="modified residue" description="4-hydroxyproline" evidence="3">
    <location>
        <position position="505"/>
    </location>
</feature>
<feature type="modified residue" description="4-hydroxyproline" evidence="3">
    <location>
        <position position="514"/>
    </location>
</feature>
<feature type="modified residue" description="4-hydroxyproline" evidence="3">
    <location>
        <position position="523"/>
    </location>
</feature>
<feature type="modified residue" description="4-hydroxyproline" evidence="3">
    <location>
        <position position="535"/>
    </location>
</feature>
<feature type="modified residue" description="4-hydroxyproline" evidence="3">
    <location>
        <position position="538"/>
    </location>
</feature>
<feature type="modified residue" description="4-hydroxyproline" evidence="3">
    <location>
        <position position="544"/>
    </location>
</feature>
<feature type="modified residue" description="4-hydroxyproline" evidence="3">
    <location>
        <position position="550"/>
    </location>
</feature>
<feature type="modified residue" description="4-hydroxyproline" evidence="3">
    <location>
        <position position="559"/>
    </location>
</feature>
<feature type="modified residue" description="5-hydroxylysine" evidence="3">
    <location>
        <position position="571"/>
    </location>
</feature>
<feature type="modified residue" description="4-hydroxyproline" evidence="3">
    <location>
        <position position="577"/>
    </location>
</feature>
<feature type="modified residue" description="4-hydroxyproline" evidence="3">
    <location>
        <position position="592"/>
    </location>
</feature>
<feature type="modified residue" description="4-hydroxyproline" evidence="3">
    <location>
        <position position="598"/>
    </location>
</feature>
<feature type="modified residue" description="Phosphoserine" evidence="2">
    <location>
        <position position="607"/>
    </location>
</feature>
<feature type="modified residue" description="4-hydroxyproline" evidence="3">
    <location>
        <position position="619"/>
    </location>
</feature>
<feature type="modified residue" description="4-hydroxyproline" evidence="3">
    <location>
        <position position="625"/>
    </location>
</feature>
<feature type="modified residue" description="4-hydroxyproline" evidence="3">
    <location>
        <position position="628"/>
    </location>
</feature>
<feature type="modified residue" description="4-hydroxyproline" evidence="3">
    <location>
        <position position="637"/>
    </location>
</feature>
<feature type="modified residue" description="4-hydroxyproline" evidence="3">
    <location>
        <position position="643"/>
    </location>
</feature>
<feature type="modified residue" description="4-hydroxyproline" evidence="3">
    <location>
        <position position="661"/>
    </location>
</feature>
<feature type="modified residue" description="4-hydroxyproline" evidence="3">
    <location>
        <position position="670"/>
    </location>
</feature>
<feature type="modified residue" description="4-hydroxyproline" evidence="3">
    <location>
        <position position="679"/>
    </location>
</feature>
<feature type="modified residue" description="5-hydroxylysine" evidence="3">
    <location>
        <position position="682"/>
    </location>
</feature>
<feature type="modified residue" description="4-hydroxyproline" evidence="3">
    <location>
        <position position="691"/>
    </location>
</feature>
<feature type="modified residue" description="4-hydroxyproline" evidence="3">
    <location>
        <position position="697"/>
    </location>
</feature>
<feature type="modified residue" description="3-hydroxyproline" evidence="4">
    <location>
        <position position="705"/>
    </location>
</feature>
<feature type="modified residue" description="4-hydroxyproline" evidence="4">
    <location>
        <position position="706"/>
    </location>
</feature>
<feature type="modified residue" description="4-hydroxyproline" evidence="4">
    <location>
        <position position="717"/>
    </location>
</feature>
<feature type="modified residue" description="4-hydroxyproline" evidence="3">
    <location>
        <position position="738"/>
    </location>
</feature>
<feature type="modified residue" description="4-hydroxyproline" evidence="3">
    <location>
        <position position="747"/>
    </location>
</feature>
<feature type="modified residue" description="4-hydroxyproline" evidence="3">
    <location>
        <position position="755"/>
    </location>
</feature>
<feature type="modified residue" description="4-hydroxyproline" evidence="3">
    <location>
        <position position="764"/>
    </location>
</feature>
<feature type="modified residue" description="4-hydroxyproline" evidence="3">
    <location>
        <position position="781"/>
    </location>
</feature>
<feature type="modified residue" description="4-hydroxyproline" evidence="3">
    <location>
        <position position="790"/>
    </location>
</feature>
<feature type="modified residue" description="4-hydroxyproline" evidence="3">
    <location>
        <position position="793"/>
    </location>
</feature>
<feature type="modified residue" description="4-hydroxyproline" evidence="3">
    <location>
        <position position="799"/>
    </location>
</feature>
<feature type="modified residue" description="4-hydroxyproline" evidence="3">
    <location>
        <position position="814"/>
    </location>
</feature>
<feature type="modified residue" description="4-hydroxyproline" evidence="3">
    <location>
        <position position="820"/>
    </location>
</feature>
<feature type="modified residue" description="4-hydroxyproline" evidence="3">
    <location>
        <position position="826"/>
    </location>
</feature>
<feature type="modified residue" description="4-hydroxyproline" evidence="3">
    <location>
        <position position="835"/>
    </location>
</feature>
<feature type="modified residue" description="4-hydroxyproline" evidence="3">
    <location>
        <position position="841"/>
    </location>
</feature>
<feature type="modified residue" description="5-hydroxylysine" evidence="3">
    <location>
        <position position="850"/>
    </location>
</feature>
<feature type="modified residue" description="4-hydroxyproline" evidence="3">
    <location>
        <position position="861"/>
    </location>
</feature>
<feature type="modified residue" description="4-hydroxyproline" evidence="3">
    <location>
        <position position="864"/>
    </location>
</feature>
<feature type="modified residue" description="4-hydroxyproline" evidence="3">
    <location>
        <position position="867"/>
    </location>
</feature>
<feature type="modified residue" description="5-hydroxylysine" evidence="3">
    <location>
        <position position="912"/>
    </location>
</feature>
<feature type="modified residue" description="5-hydroxylysine; alternate" evidence="3">
    <location>
        <position position="924"/>
    </location>
</feature>
<feature type="modified residue" description="4-hydroxyproline" evidence="3">
    <location>
        <position position="939"/>
    </location>
</feature>
<feature type="modified residue" description="4-hydroxyproline" evidence="3">
    <location>
        <position position="942"/>
    </location>
</feature>
<feature type="modified residue" description="4-hydroxyproline" evidence="3">
    <location>
        <position position="960"/>
    </location>
</feature>
<feature type="modified residue" description="4-hydroxyproline" evidence="4">
    <location>
        <position position="975"/>
    </location>
</feature>
<feature type="modified residue" description="3-hydroxyproline" evidence="4">
    <location>
        <position position="980"/>
    </location>
</feature>
<feature type="modified residue" description="4-hydroxyproline" evidence="4">
    <location>
        <position position="981"/>
    </location>
</feature>
<feature type="modified residue" description="3-hydroxyproline" evidence="4">
    <location>
        <position position="995"/>
    </location>
</feature>
<feature type="modified residue" description="4-hydroxyproline" evidence="4">
    <location>
        <position position="996"/>
    </location>
</feature>
<feature type="modified residue" description="3-hydroxyproline" evidence="4">
    <location>
        <position position="998"/>
    </location>
</feature>
<feature type="modified residue" description="4-hydroxyproline" evidence="4">
    <location>
        <position position="999"/>
    </location>
</feature>
<feature type="modified residue" description="3-hydroxyproline" evidence="4">
    <location>
        <position position="1001"/>
    </location>
</feature>
<feature type="modified residue" description="4-hydroxyproline" evidence="4">
    <location>
        <position position="1002"/>
    </location>
</feature>
<feature type="modified residue" description="4-hydroxyproline" evidence="4">
    <location>
        <position position="1005"/>
    </location>
</feature>
<feature type="modified residue" description="4-hydroxyproline" evidence="4">
    <location>
        <position position="1008"/>
    </location>
</feature>
<feature type="glycosylation site" description="O-linked (Gal...) hydroxylysine; alternate" evidence="1">
    <location>
        <position position="91"/>
    </location>
</feature>
<feature type="glycosylation site" description="O-linked (Gal...) hydroxylysine; alternate" evidence="3">
    <location>
        <position position="924"/>
    </location>
</feature>
<feature type="unsure residue" description="I or L" evidence="7">
    <location>
        <position position="3"/>
    </location>
</feature>
<feature type="unsure residue" description="L or I" evidence="7">
    <location>
        <position position="17"/>
    </location>
</feature>
<feature type="unsure residue" description="L or I" evidence="7">
    <location>
        <position position="81"/>
    </location>
</feature>
<feature type="unsure residue" description="L or I" evidence="7">
    <location>
        <position position="87"/>
    </location>
</feature>
<feature type="unsure residue" description="L or I" evidence="7">
    <location>
        <position position="99"/>
    </location>
</feature>
<feature type="unsure residue" description="L or I" evidence="7">
    <location>
        <position position="132"/>
    </location>
</feature>
<feature type="unsure residue" description="I or L" evidence="7">
    <location>
        <position position="231"/>
    </location>
</feature>
<feature type="unsure residue" description="I or L" evidence="7">
    <location>
        <position position="280"/>
    </location>
</feature>
<feature type="unsure residue" description="L or I" evidence="7">
    <location>
        <position position="304"/>
    </location>
</feature>
<feature type="unsure residue" description="L or I" evidence="7">
    <location>
        <position position="358"/>
    </location>
</feature>
<feature type="unsure residue" description="L or I" evidence="7">
    <location>
        <position position="364"/>
    </location>
</feature>
<feature type="unsure residue" description="L or I" evidence="7">
    <location>
        <position position="468"/>
    </location>
</feature>
<feature type="unsure residue" description="L or I" evidence="7">
    <location>
        <position position="490"/>
    </location>
</feature>
<feature type="unsure residue" description="L or I" evidence="7">
    <location>
        <position position="546"/>
    </location>
</feature>
<feature type="unsure residue" description="L or I" evidence="7">
    <location>
        <position position="558"/>
    </location>
</feature>
<feature type="unsure residue" description="L or I" evidence="7">
    <location>
        <position position="585"/>
    </location>
</feature>
<feature type="unsure residue" description="I or L" evidence="7">
    <location>
        <position position="589"/>
    </location>
</feature>
<feature type="unsure residue" description="I or L" evidence="7">
    <location>
        <position position="673"/>
    </location>
</feature>
<feature type="unsure residue" description="I or L" evidence="7">
    <location>
        <position position="772"/>
    </location>
</feature>
<feature type="unsure residue" description="L or I" evidence="7">
    <location>
        <position position="780"/>
    </location>
</feature>
<feature type="unsure residue" description="L or I" evidence="7">
    <location>
        <position position="792"/>
    </location>
</feature>
<feature type="unsure residue" description="L or I" evidence="7">
    <location>
        <position position="822"/>
    </location>
</feature>
<feature type="unsure residue" description="I or L" evidence="7">
    <location>
        <position position="923"/>
    </location>
</feature>
<feature type="unsure residue" description="L or I" evidence="7">
    <location>
        <position position="932"/>
    </location>
</feature>
<feature type="unsure residue" description="L or I" evidence="7">
    <location>
        <position position="971"/>
    </location>
</feature>
<feature type="unsure residue" description="L or I" evidence="7">
    <location>
        <position position="974"/>
    </location>
</feature>
<feature type="unsure residue" description="I or L" evidence="7">
    <location>
        <position position="978"/>
    </location>
</feature>
<feature type="non-consecutive residues" evidence="7">
    <location>
        <begin position="22"/>
        <end position="23"/>
    </location>
</feature>
<feature type="non-consecutive residues" evidence="7">
    <location>
        <begin position="39"/>
        <end position="40"/>
    </location>
</feature>
<feature type="non-consecutive residues" evidence="7">
    <location>
        <begin position="239"/>
        <end position="240"/>
    </location>
</feature>
<feature type="non-consecutive residues" evidence="7">
    <location>
        <begin position="250"/>
        <end position="251"/>
    </location>
</feature>
<feature type="non-consecutive residues" evidence="7">
    <location>
        <begin position="405"/>
        <end position="406"/>
    </location>
</feature>
<feature type="non-consecutive residues" evidence="7">
    <location>
        <begin position="462"/>
        <end position="463"/>
    </location>
</feature>
<feature type="non-consecutive residues" evidence="7">
    <location>
        <begin position="521"/>
        <end position="522"/>
    </location>
</feature>
<feature type="non-consecutive residues" evidence="7">
    <location>
        <begin position="713"/>
        <end position="714"/>
    </location>
</feature>
<feature type="non-consecutive residues" evidence="7">
    <location>
        <begin position="749"/>
        <end position="750"/>
    </location>
</feature>
<feature type="non-consecutive residues" evidence="7">
    <location>
        <begin position="772"/>
        <end position="773"/>
    </location>
</feature>
<feature type="non-consecutive residues" evidence="7">
    <location>
        <begin position="858"/>
        <end position="859"/>
    </location>
</feature>
<feature type="non-terminal residue" evidence="7">
    <location>
        <position position="1"/>
    </location>
</feature>
<feature type="non-terminal residue" evidence="7">
    <location>
        <position position="1008"/>
    </location>
</feature>
<sequence length="1008" mass="89627">GGISVPGPMGPSGPRGLPGPPGPGPQGFQGPPGEPGEPGSGPMGPRGPPGPPGKNGDDGEAGKPGRPGERGPPGPQGARGLPGTAGLPGMKGHRGFSGLDGAKGDAGPAGPKGEPGSPGENGAPGQMGPRGLPGERGRPGASGPAGARGNDGAAGAAGPPGPTGPAGPPGFPGAVGAKGEAGPQGARGSEGPQGVRGEPGPPGPAGAAGPAGNPGADGQPGAKGANGAPGIAGAPGFPGRGPSGPQGPSGPGPKGNSGEPGAPGSKGDTGAKGEPGPTGIQGPPGPAGEEGKRGARGEPGPTGLPGPPGERGGPGSRGFPGADGVAGPKGPAGERGSPGPAGPKGSPGEAGRPGEAGLPGAKGLTGSPGSPGPDGKTGPPGPAGQDGRPGPPGPPGARGQAGVMGFPGPKGAAGEPGKAGERGVPGPPGAVGPAGKDGEAGAQGPPGPAGPAGERGEQGPAGPGFQGLPGPAGPPGEAGKPGEQGVPGDLGAPGPSGARGERGFPGERGVQGPPGPAGPRGAPGNDGAKGDAGAPGAPGSQGAPGLQGMPGERGAAGLPGPKGDRGDAGPKGADGAPGKDGVRGLTGPIGPPGPAGAPGDKGESGPSGPAGPTGARGAPGDRGEPGPPGPAGFAGPPGADGQPGAKGEPGDAGAKGDAGPPGPAGPTGPPGPIGNVGAPGPKGARGSAGPPGATGFPGAAGRVGPPGPSGNAGPGPPGPVGKEGGKGPRGETGPAGRPGEVGPPGPPGPGEKGSPGADGPAGAPGTPGPQGIGQRGVVGLPGQRGERGFPGLPGPSGEPGKQGPSGSSGERGPPGPVGPPGLAGPPGESGREGSPGAEGSPGRDGSPGPKGDRGETGPGPPGAPGAPGAPGPVGPAGKSGDRGETGPAGPAGPAGPAGARGPAGPQGPRGDKGETGEQGDRGIKGHRGFSGLQGPAGPPGSPGEQGPSGASGPAGPRGPPGSAGSPGKDGLNGLPGPIGPPGPRGRTGDAGPVGPPGPPGPPGPPGPP</sequence>
<organism evidence="7">
    <name type="scientific">Paramylodon harlani</name>
    <name type="common">Harlan's ground sloth</name>
    <name type="synonym">Glossotherium harlani</name>
    <dbReference type="NCBI Taxonomy" id="2546661"/>
    <lineage>
        <taxon>Eukaryota</taxon>
        <taxon>Metazoa</taxon>
        <taxon>Chordata</taxon>
        <taxon>Craniata</taxon>
        <taxon>Vertebrata</taxon>
        <taxon>Euteleostomi</taxon>
        <taxon>Mammalia</taxon>
        <taxon>Eutheria</taxon>
        <taxon>Xenarthra</taxon>
        <taxon>Pilosa</taxon>
        <taxon>Folivora</taxon>
        <taxon>Mylodontidae</taxon>
        <taxon>Paramylodon</taxon>
    </lineage>
</organism>
<proteinExistence type="evidence at protein level"/>